<dbReference type="EMBL" id="FM204884">
    <property type="protein sequence ID" value="CAX00224.1"/>
    <property type="molecule type" value="Genomic_DNA"/>
</dbReference>
<dbReference type="SMR" id="C0MDY4"/>
<dbReference type="KEGG" id="seq:SZO_15370"/>
<dbReference type="eggNOG" id="COG0858">
    <property type="taxonomic scope" value="Bacteria"/>
</dbReference>
<dbReference type="HOGENOM" id="CLU_089475_3_0_9"/>
<dbReference type="Proteomes" id="UP000001368">
    <property type="component" value="Chromosome"/>
</dbReference>
<dbReference type="GO" id="GO:0005829">
    <property type="term" value="C:cytosol"/>
    <property type="evidence" value="ECO:0007669"/>
    <property type="project" value="TreeGrafter"/>
</dbReference>
<dbReference type="GO" id="GO:0043024">
    <property type="term" value="F:ribosomal small subunit binding"/>
    <property type="evidence" value="ECO:0007669"/>
    <property type="project" value="TreeGrafter"/>
</dbReference>
<dbReference type="GO" id="GO:0030490">
    <property type="term" value="P:maturation of SSU-rRNA"/>
    <property type="evidence" value="ECO:0007669"/>
    <property type="project" value="UniProtKB-UniRule"/>
</dbReference>
<dbReference type="Gene3D" id="3.30.300.20">
    <property type="match status" value="1"/>
</dbReference>
<dbReference type="HAMAP" id="MF_00003">
    <property type="entry name" value="RbfA"/>
    <property type="match status" value="1"/>
</dbReference>
<dbReference type="InterPro" id="IPR015946">
    <property type="entry name" value="KH_dom-like_a/b"/>
</dbReference>
<dbReference type="InterPro" id="IPR000238">
    <property type="entry name" value="RbfA"/>
</dbReference>
<dbReference type="InterPro" id="IPR023799">
    <property type="entry name" value="RbfA_dom_sf"/>
</dbReference>
<dbReference type="InterPro" id="IPR020053">
    <property type="entry name" value="Ribosome-bd_factorA_CS"/>
</dbReference>
<dbReference type="NCBIfam" id="TIGR00082">
    <property type="entry name" value="rbfA"/>
    <property type="match status" value="1"/>
</dbReference>
<dbReference type="PANTHER" id="PTHR33515">
    <property type="entry name" value="RIBOSOME-BINDING FACTOR A, CHLOROPLASTIC-RELATED"/>
    <property type="match status" value="1"/>
</dbReference>
<dbReference type="PANTHER" id="PTHR33515:SF1">
    <property type="entry name" value="RIBOSOME-BINDING FACTOR A, CHLOROPLASTIC-RELATED"/>
    <property type="match status" value="1"/>
</dbReference>
<dbReference type="Pfam" id="PF02033">
    <property type="entry name" value="RBFA"/>
    <property type="match status" value="1"/>
</dbReference>
<dbReference type="SUPFAM" id="SSF89919">
    <property type="entry name" value="Ribosome-binding factor A, RbfA"/>
    <property type="match status" value="1"/>
</dbReference>
<dbReference type="PROSITE" id="PS01319">
    <property type="entry name" value="RBFA"/>
    <property type="match status" value="1"/>
</dbReference>
<accession>C0MDY4</accession>
<feature type="chain" id="PRO_1000201654" description="Ribosome-binding factor A">
    <location>
        <begin position="1"/>
        <end position="116"/>
    </location>
</feature>
<organism>
    <name type="scientific">Streptococcus equi subsp. zooepidemicus (strain H70)</name>
    <dbReference type="NCBI Taxonomy" id="553483"/>
    <lineage>
        <taxon>Bacteria</taxon>
        <taxon>Bacillati</taxon>
        <taxon>Bacillota</taxon>
        <taxon>Bacilli</taxon>
        <taxon>Lactobacillales</taxon>
        <taxon>Streptococcaceae</taxon>
        <taxon>Streptococcus</taxon>
    </lineage>
</organism>
<name>RBFA_STRS7</name>
<comment type="function">
    <text evidence="1">One of several proteins that assist in the late maturation steps of the functional core of the 30S ribosomal subunit. Associates with free 30S ribosomal subunits (but not with 30S subunits that are part of 70S ribosomes or polysomes). Required for efficient processing of 16S rRNA. May interact with the 5'-terminal helix region of 16S rRNA.</text>
</comment>
<comment type="subunit">
    <text evidence="1">Monomer. Binds 30S ribosomal subunits, but not 50S ribosomal subunits or 70S ribosomes.</text>
</comment>
<comment type="subcellular location">
    <subcellularLocation>
        <location evidence="1">Cytoplasm</location>
    </subcellularLocation>
</comment>
<comment type="similarity">
    <text evidence="1">Belongs to the RbfA family.</text>
</comment>
<gene>
    <name evidence="1" type="primary">rbfA</name>
    <name type="ordered locus">SZO_15370</name>
</gene>
<proteinExistence type="inferred from homology"/>
<evidence type="ECO:0000255" key="1">
    <source>
        <dbReference type="HAMAP-Rule" id="MF_00003"/>
    </source>
</evidence>
<protein>
    <recommendedName>
        <fullName evidence="1">Ribosome-binding factor A</fullName>
    </recommendedName>
</protein>
<reference key="1">
    <citation type="journal article" date="2009" name="PLoS Pathog.">
        <title>Genomic evidence for the evolution of Streptococcus equi: host restriction, increased virulence, and genetic exchange with human pathogens.</title>
        <authorList>
            <person name="Holden M.T.G."/>
            <person name="Heather Z."/>
            <person name="Paillot R."/>
            <person name="Steward K.F."/>
            <person name="Webb K."/>
            <person name="Ainslie F."/>
            <person name="Jourdan T."/>
            <person name="Bason N.C."/>
            <person name="Holroyd N.E."/>
            <person name="Mungall K."/>
            <person name="Quail M.A."/>
            <person name="Sanders M."/>
            <person name="Simmonds M."/>
            <person name="Willey D."/>
            <person name="Brooks K."/>
            <person name="Aanensen D.M."/>
            <person name="Spratt B.G."/>
            <person name="Jolley K.A."/>
            <person name="Maiden M.C.J."/>
            <person name="Kehoe M."/>
            <person name="Chanter N."/>
            <person name="Bentley S.D."/>
            <person name="Robinson C."/>
            <person name="Maskell D.J."/>
            <person name="Parkhill J."/>
            <person name="Waller A.S."/>
        </authorList>
    </citation>
    <scope>NUCLEOTIDE SEQUENCE [LARGE SCALE GENOMIC DNA]</scope>
    <source>
        <strain>H70</strain>
    </source>
</reference>
<sequence>MTNHRIDRVGMEIKREVNEILHKKVRDPRVQGVTITEVQMLGDLSVAKVYYTIMSDLASDNQKAEIGLKKATGTIKRELGKQLTMYKIPDLVFEKDNSIAYGNKIDQLLRELEKKQ</sequence>
<keyword id="KW-0963">Cytoplasm</keyword>
<keyword id="KW-0690">Ribosome biogenesis</keyword>